<protein>
    <recommendedName>
        <fullName evidence="1">1-(5-phosphoribosyl)-5-[(5-phosphoribosylamino)methylideneamino] imidazole-4-carboxamide isomerase</fullName>
        <ecNumber evidence="1">5.3.1.16</ecNumber>
    </recommendedName>
    <alternativeName>
        <fullName evidence="1">Phosphoribosylformimino-5-aminoimidazole carboxamide ribotide isomerase</fullName>
    </alternativeName>
</protein>
<accession>A6LDI6</accession>
<dbReference type="EC" id="5.3.1.16" evidence="1"/>
<dbReference type="EMBL" id="CP000140">
    <property type="protein sequence ID" value="ABR43750.1"/>
    <property type="molecule type" value="Genomic_DNA"/>
</dbReference>
<dbReference type="RefSeq" id="WP_009275764.1">
    <property type="nucleotide sequence ID" value="NC_009615.1"/>
</dbReference>
<dbReference type="SMR" id="A6LDI6"/>
<dbReference type="STRING" id="435591.BDI_2017"/>
<dbReference type="PaxDb" id="435591-BDI_2017"/>
<dbReference type="KEGG" id="pdi:BDI_2017"/>
<dbReference type="eggNOG" id="COG0106">
    <property type="taxonomic scope" value="Bacteria"/>
</dbReference>
<dbReference type="HOGENOM" id="CLU_048577_1_2_10"/>
<dbReference type="BioCyc" id="PDIS435591:G1G5A-2070-MONOMER"/>
<dbReference type="UniPathway" id="UPA00031">
    <property type="reaction ID" value="UER00009"/>
</dbReference>
<dbReference type="Proteomes" id="UP000000566">
    <property type="component" value="Chromosome"/>
</dbReference>
<dbReference type="GO" id="GO:0005737">
    <property type="term" value="C:cytoplasm"/>
    <property type="evidence" value="ECO:0007669"/>
    <property type="project" value="UniProtKB-SubCell"/>
</dbReference>
<dbReference type="GO" id="GO:0003949">
    <property type="term" value="F:1-(5-phosphoribosyl)-5-[(5-phosphoribosylamino)methylideneamino]imidazole-4-carboxamide isomerase activity"/>
    <property type="evidence" value="ECO:0007669"/>
    <property type="project" value="UniProtKB-UniRule"/>
</dbReference>
<dbReference type="GO" id="GO:0000105">
    <property type="term" value="P:L-histidine biosynthetic process"/>
    <property type="evidence" value="ECO:0007669"/>
    <property type="project" value="UniProtKB-UniRule"/>
</dbReference>
<dbReference type="GO" id="GO:0000162">
    <property type="term" value="P:L-tryptophan biosynthetic process"/>
    <property type="evidence" value="ECO:0007669"/>
    <property type="project" value="TreeGrafter"/>
</dbReference>
<dbReference type="CDD" id="cd04732">
    <property type="entry name" value="HisA"/>
    <property type="match status" value="1"/>
</dbReference>
<dbReference type="FunFam" id="3.20.20.70:FF:000009">
    <property type="entry name" value="1-(5-phosphoribosyl)-5-[(5-phosphoribosylamino)methylideneamino] imidazole-4-carboxamide isomerase"/>
    <property type="match status" value="1"/>
</dbReference>
<dbReference type="Gene3D" id="3.20.20.70">
    <property type="entry name" value="Aldolase class I"/>
    <property type="match status" value="1"/>
</dbReference>
<dbReference type="HAMAP" id="MF_01014">
    <property type="entry name" value="HisA"/>
    <property type="match status" value="1"/>
</dbReference>
<dbReference type="InterPro" id="IPR013785">
    <property type="entry name" value="Aldolase_TIM"/>
</dbReference>
<dbReference type="InterPro" id="IPR006062">
    <property type="entry name" value="His_biosynth"/>
</dbReference>
<dbReference type="InterPro" id="IPR006063">
    <property type="entry name" value="HisA_bact_arch"/>
</dbReference>
<dbReference type="InterPro" id="IPR044524">
    <property type="entry name" value="Isoase_HisA-like"/>
</dbReference>
<dbReference type="InterPro" id="IPR023016">
    <property type="entry name" value="Isoase_HisA-like_bact"/>
</dbReference>
<dbReference type="InterPro" id="IPR011060">
    <property type="entry name" value="RibuloseP-bd_barrel"/>
</dbReference>
<dbReference type="NCBIfam" id="TIGR00007">
    <property type="entry name" value="1-(5-phosphoribosyl)-5-[(5-phosphoribosylamino)methylideneamino]imidazole-4-carboxamide isomerase"/>
    <property type="match status" value="1"/>
</dbReference>
<dbReference type="PANTHER" id="PTHR43090">
    <property type="entry name" value="1-(5-PHOSPHORIBOSYL)-5-[(5-PHOSPHORIBOSYLAMINO)METHYLIDENEAMINO] IMIDAZOLE-4-CARBOXAMIDE ISOMERASE"/>
    <property type="match status" value="1"/>
</dbReference>
<dbReference type="PANTHER" id="PTHR43090:SF2">
    <property type="entry name" value="1-(5-PHOSPHORIBOSYL)-5-[(5-PHOSPHORIBOSYLAMINO)METHYLIDENEAMINO] IMIDAZOLE-4-CARBOXAMIDE ISOMERASE"/>
    <property type="match status" value="1"/>
</dbReference>
<dbReference type="Pfam" id="PF00977">
    <property type="entry name" value="His_biosynth"/>
    <property type="match status" value="1"/>
</dbReference>
<dbReference type="SUPFAM" id="SSF51366">
    <property type="entry name" value="Ribulose-phoshate binding barrel"/>
    <property type="match status" value="1"/>
</dbReference>
<name>HIS4_PARD8</name>
<organism>
    <name type="scientific">Parabacteroides distasonis (strain ATCC 8503 / DSM 20701 / CIP 104284 / JCM 5825 / NCTC 11152)</name>
    <dbReference type="NCBI Taxonomy" id="435591"/>
    <lineage>
        <taxon>Bacteria</taxon>
        <taxon>Pseudomonadati</taxon>
        <taxon>Bacteroidota</taxon>
        <taxon>Bacteroidia</taxon>
        <taxon>Bacteroidales</taxon>
        <taxon>Tannerellaceae</taxon>
        <taxon>Parabacteroides</taxon>
    </lineage>
</organism>
<reference key="1">
    <citation type="journal article" date="2007" name="PLoS Biol.">
        <title>Evolution of symbiotic bacteria in the distal human intestine.</title>
        <authorList>
            <person name="Xu J."/>
            <person name="Mahowald M.A."/>
            <person name="Ley R.E."/>
            <person name="Lozupone C.A."/>
            <person name="Hamady M."/>
            <person name="Martens E.C."/>
            <person name="Henrissat B."/>
            <person name="Coutinho P.M."/>
            <person name="Minx P."/>
            <person name="Latreille P."/>
            <person name="Cordum H."/>
            <person name="Van Brunt A."/>
            <person name="Kim K."/>
            <person name="Fulton R.S."/>
            <person name="Fulton L.A."/>
            <person name="Clifton S.W."/>
            <person name="Wilson R.K."/>
            <person name="Knight R.D."/>
            <person name="Gordon J.I."/>
        </authorList>
    </citation>
    <scope>NUCLEOTIDE SEQUENCE [LARGE SCALE GENOMIC DNA]</scope>
    <source>
        <strain>ATCC 8503 / DSM 20701 / CIP 104284 / JCM 5825 / NCTC 11152</strain>
    </source>
</reference>
<comment type="catalytic activity">
    <reaction evidence="1">
        <text>1-(5-phospho-beta-D-ribosyl)-5-[(5-phospho-beta-D-ribosylamino)methylideneamino]imidazole-4-carboxamide = 5-[(5-phospho-1-deoxy-D-ribulos-1-ylimino)methylamino]-1-(5-phospho-beta-D-ribosyl)imidazole-4-carboxamide</text>
        <dbReference type="Rhea" id="RHEA:15469"/>
        <dbReference type="ChEBI" id="CHEBI:58435"/>
        <dbReference type="ChEBI" id="CHEBI:58525"/>
        <dbReference type="EC" id="5.3.1.16"/>
    </reaction>
</comment>
<comment type="pathway">
    <text evidence="1">Amino-acid biosynthesis; L-histidine biosynthesis; L-histidine from 5-phospho-alpha-D-ribose 1-diphosphate: step 4/9.</text>
</comment>
<comment type="subcellular location">
    <subcellularLocation>
        <location evidence="1">Cytoplasm</location>
    </subcellularLocation>
</comment>
<comment type="similarity">
    <text evidence="1">Belongs to the HisA/HisF family.</text>
</comment>
<gene>
    <name evidence="1" type="primary">hisA</name>
    <name type="ordered locus">BDI_2017</name>
</gene>
<keyword id="KW-0028">Amino-acid biosynthesis</keyword>
<keyword id="KW-0963">Cytoplasm</keyword>
<keyword id="KW-0368">Histidine biosynthesis</keyword>
<keyword id="KW-0413">Isomerase</keyword>
<keyword id="KW-1185">Reference proteome</keyword>
<proteinExistence type="inferred from homology"/>
<sequence length="239" mass="26456">MIELIPAIDIIDGKCVRLTQGDYATKKVYNEDPLEVAKMFEGNGIRRLHVVDLDGAREGRIINYRILERIATRTSLIIDFGGGLKQEDDLEIAFESGAQMVTGGSIAVKNPEMFTSWISKFGSEKIILGADAKEKKIAISGWEETTSQELVPFIKGYYDKGITKVICTDIARDGMLQGPAIDLYKEIRDEIPFLYIIASGGVSSIEDIEKLSEAGIPAVIFGKAIYEGKIQLKDLLRFT</sequence>
<evidence type="ECO:0000255" key="1">
    <source>
        <dbReference type="HAMAP-Rule" id="MF_01014"/>
    </source>
</evidence>
<feature type="chain" id="PRO_1000063224" description="1-(5-phosphoribosyl)-5-[(5-phosphoribosylamino)methylideneamino] imidazole-4-carboxamide isomerase">
    <location>
        <begin position="1"/>
        <end position="239"/>
    </location>
</feature>
<feature type="active site" description="Proton acceptor" evidence="1">
    <location>
        <position position="9"/>
    </location>
</feature>
<feature type="active site" description="Proton donor" evidence="1">
    <location>
        <position position="131"/>
    </location>
</feature>